<keyword id="KW-0067">ATP-binding</keyword>
<keyword id="KW-0418">Kinase</keyword>
<keyword id="KW-0460">Magnesium</keyword>
<keyword id="KW-0479">Metal-binding</keyword>
<keyword id="KW-0547">Nucleotide-binding</keyword>
<keyword id="KW-0784">Thiamine biosynthesis</keyword>
<keyword id="KW-0808">Transferase</keyword>
<name>THIM_LACCB</name>
<evidence type="ECO:0000255" key="1">
    <source>
        <dbReference type="HAMAP-Rule" id="MF_00228"/>
    </source>
</evidence>
<comment type="function">
    <text evidence="1">Catalyzes the phosphorylation of the hydroxyl group of 4-methyl-5-beta-hydroxyethylthiazole (THZ).</text>
</comment>
<comment type="catalytic activity">
    <reaction evidence="1">
        <text>5-(2-hydroxyethyl)-4-methylthiazole + ATP = 4-methyl-5-(2-phosphooxyethyl)-thiazole + ADP + H(+)</text>
        <dbReference type="Rhea" id="RHEA:24212"/>
        <dbReference type="ChEBI" id="CHEBI:15378"/>
        <dbReference type="ChEBI" id="CHEBI:17957"/>
        <dbReference type="ChEBI" id="CHEBI:30616"/>
        <dbReference type="ChEBI" id="CHEBI:58296"/>
        <dbReference type="ChEBI" id="CHEBI:456216"/>
        <dbReference type="EC" id="2.7.1.50"/>
    </reaction>
</comment>
<comment type="cofactor">
    <cofactor evidence="1">
        <name>Mg(2+)</name>
        <dbReference type="ChEBI" id="CHEBI:18420"/>
    </cofactor>
</comment>
<comment type="pathway">
    <text evidence="1">Cofactor biosynthesis; thiamine diphosphate biosynthesis; 4-methyl-5-(2-phosphoethyl)-thiazole from 5-(2-hydroxyethyl)-4-methylthiazole: step 1/1.</text>
</comment>
<comment type="similarity">
    <text evidence="1">Belongs to the Thz kinase family.</text>
</comment>
<dbReference type="EC" id="2.7.1.50" evidence="1"/>
<dbReference type="EMBL" id="FM177140">
    <property type="protein sequence ID" value="CAQ65441.1"/>
    <property type="molecule type" value="Genomic_DNA"/>
</dbReference>
<dbReference type="SMR" id="B3W782"/>
<dbReference type="KEGG" id="lcb:LCABL_03150"/>
<dbReference type="HOGENOM" id="CLU_019943_0_0_9"/>
<dbReference type="UniPathway" id="UPA00060">
    <property type="reaction ID" value="UER00139"/>
</dbReference>
<dbReference type="GO" id="GO:0005524">
    <property type="term" value="F:ATP binding"/>
    <property type="evidence" value="ECO:0007669"/>
    <property type="project" value="UniProtKB-UniRule"/>
</dbReference>
<dbReference type="GO" id="GO:0004417">
    <property type="term" value="F:hydroxyethylthiazole kinase activity"/>
    <property type="evidence" value="ECO:0007669"/>
    <property type="project" value="UniProtKB-UniRule"/>
</dbReference>
<dbReference type="GO" id="GO:0000287">
    <property type="term" value="F:magnesium ion binding"/>
    <property type="evidence" value="ECO:0007669"/>
    <property type="project" value="UniProtKB-UniRule"/>
</dbReference>
<dbReference type="GO" id="GO:0009228">
    <property type="term" value="P:thiamine biosynthetic process"/>
    <property type="evidence" value="ECO:0007669"/>
    <property type="project" value="UniProtKB-KW"/>
</dbReference>
<dbReference type="GO" id="GO:0009229">
    <property type="term" value="P:thiamine diphosphate biosynthetic process"/>
    <property type="evidence" value="ECO:0007669"/>
    <property type="project" value="UniProtKB-UniRule"/>
</dbReference>
<dbReference type="CDD" id="cd01170">
    <property type="entry name" value="THZ_kinase"/>
    <property type="match status" value="1"/>
</dbReference>
<dbReference type="Gene3D" id="3.40.1190.20">
    <property type="match status" value="1"/>
</dbReference>
<dbReference type="HAMAP" id="MF_00228">
    <property type="entry name" value="Thz_kinase"/>
    <property type="match status" value="1"/>
</dbReference>
<dbReference type="InterPro" id="IPR000417">
    <property type="entry name" value="Hyethyz_kinase"/>
</dbReference>
<dbReference type="InterPro" id="IPR029056">
    <property type="entry name" value="Ribokinase-like"/>
</dbReference>
<dbReference type="Pfam" id="PF02110">
    <property type="entry name" value="HK"/>
    <property type="match status" value="1"/>
</dbReference>
<dbReference type="PIRSF" id="PIRSF000513">
    <property type="entry name" value="Thz_kinase"/>
    <property type="match status" value="1"/>
</dbReference>
<dbReference type="PRINTS" id="PR01099">
    <property type="entry name" value="HYETHTZKNASE"/>
</dbReference>
<dbReference type="SUPFAM" id="SSF53613">
    <property type="entry name" value="Ribokinase-like"/>
    <property type="match status" value="1"/>
</dbReference>
<sequence>MSKVITDVFYTAFKTALPLTSSPLVQCITNEITVESMANALLYIDAKPVMADDQREFPEFFAQSDALLLNLGHISEVRQQNLLAAGKFAQATNQPTVIDLVGVSATQLRYDLGHQLLANHPNVVKGNISEMRRFADLKSTGRGVDGSQLDQSATALGELAASLQQLTQAFPTTTFLATGKIDLVVSAKGTWYLKNGVPQLDRFTGTGDIVGALIAALLGTGLDNDAAVVVAVSYFNCCGEVAAAQNRTGGLAAFREGTLNQLSLLAATADWLQMVKGEAL</sequence>
<protein>
    <recommendedName>
        <fullName evidence="1">Hydroxyethylthiazole kinase</fullName>
        <ecNumber evidence="1">2.7.1.50</ecNumber>
    </recommendedName>
    <alternativeName>
        <fullName evidence="1">4-methyl-5-beta-hydroxyethylthiazole kinase</fullName>
        <shortName evidence="1">TH kinase</shortName>
        <shortName evidence="1">Thz kinase</shortName>
    </alternativeName>
</protein>
<organism>
    <name type="scientific">Lacticaseibacillus casei (strain BL23)</name>
    <name type="common">Lactobacillus casei</name>
    <dbReference type="NCBI Taxonomy" id="543734"/>
    <lineage>
        <taxon>Bacteria</taxon>
        <taxon>Bacillati</taxon>
        <taxon>Bacillota</taxon>
        <taxon>Bacilli</taxon>
        <taxon>Lactobacillales</taxon>
        <taxon>Lactobacillaceae</taxon>
        <taxon>Lacticaseibacillus</taxon>
    </lineage>
</organism>
<accession>B3W782</accession>
<feature type="chain" id="PRO_0000383870" description="Hydroxyethylthiazole kinase">
    <location>
        <begin position="1"/>
        <end position="280"/>
    </location>
</feature>
<feature type="binding site" evidence="1">
    <location>
        <position position="50"/>
    </location>
    <ligand>
        <name>substrate</name>
    </ligand>
</feature>
<feature type="binding site" evidence="1">
    <location>
        <position position="125"/>
    </location>
    <ligand>
        <name>ATP</name>
        <dbReference type="ChEBI" id="CHEBI:30616"/>
    </ligand>
</feature>
<feature type="binding site" evidence="1">
    <location>
        <position position="178"/>
    </location>
    <ligand>
        <name>ATP</name>
        <dbReference type="ChEBI" id="CHEBI:30616"/>
    </ligand>
</feature>
<feature type="binding site" evidence="1">
    <location>
        <position position="205"/>
    </location>
    <ligand>
        <name>substrate</name>
    </ligand>
</feature>
<gene>
    <name evidence="1" type="primary">thiM</name>
    <name type="ordered locus">LCABL_03150</name>
</gene>
<reference key="1">
    <citation type="submission" date="2008-06" db="EMBL/GenBank/DDBJ databases">
        <title>Lactobacillus casei BL23 complete genome sequence.</title>
        <authorList>
            <person name="Maze A."/>
            <person name="Boel G."/>
            <person name="Bourand A."/>
            <person name="Loux V."/>
            <person name="Gibrat J.F."/>
            <person name="Zuniga M."/>
            <person name="Hartke A."/>
            <person name="Deutscher J."/>
        </authorList>
    </citation>
    <scope>NUCLEOTIDE SEQUENCE [LARGE SCALE GENOMIC DNA]</scope>
    <source>
        <strain>BL23</strain>
    </source>
</reference>
<proteinExistence type="inferred from homology"/>